<feature type="chain" id="PRO_0000051298" description="EARP and GARP complex-interacting protein 1">
    <location>
        <begin position="1"/>
        <end position="387"/>
    </location>
</feature>
<feature type="repeat" description="WD 1">
    <location>
        <begin position="4"/>
        <end position="48"/>
    </location>
</feature>
<feature type="repeat" description="WD 2">
    <location>
        <begin position="55"/>
        <end position="101"/>
    </location>
</feature>
<feature type="repeat" description="WD 3">
    <location>
        <begin position="124"/>
        <end position="164"/>
    </location>
</feature>
<feature type="repeat" description="WD 4">
    <location>
        <begin position="172"/>
        <end position="214"/>
    </location>
</feature>
<feature type="repeat" description="WD 5">
    <location>
        <begin position="219"/>
        <end position="258"/>
    </location>
</feature>
<feature type="repeat" description="WD 6">
    <location>
        <begin position="263"/>
        <end position="302"/>
    </location>
</feature>
<feature type="repeat" description="WD 7">
    <location>
        <begin position="338"/>
        <end position="379"/>
    </location>
</feature>
<feature type="region of interest" description="Disordered" evidence="2">
    <location>
        <begin position="310"/>
        <end position="335"/>
    </location>
</feature>
<feature type="compositionally biased region" description="Basic and acidic residues" evidence="2">
    <location>
        <begin position="322"/>
        <end position="335"/>
    </location>
</feature>
<feature type="modified residue" description="N-acetylmethionine" evidence="9">
    <location>
        <position position="1"/>
    </location>
</feature>
<feature type="modified residue" description="Phosphoserine" evidence="8">
    <location>
        <position position="320"/>
    </location>
</feature>
<feature type="sequence conflict" description="In Ref. 2; BAD96372." evidence="5" ref="2">
    <original>N</original>
    <variation>S</variation>
    <location>
        <position position="58"/>
    </location>
</feature>
<feature type="sequence conflict" description="In Ref. 2; BAD96372." evidence="5" ref="2">
    <original>T</original>
    <variation>A</variation>
    <location>
        <position position="214"/>
    </location>
</feature>
<accession>Q53HC9</accession>
<accession>D6W4Y1</accession>
<accession>O43179</accession>
<accession>Q53S19</accession>
<accession>Q53SG2</accession>
<protein>
    <recommendedName>
        <fullName evidence="6">EARP and GARP complex-interacting protein 1</fullName>
    </recommendedName>
    <alternativeName>
        <fullName evidence="6">Endosome-associated recycling protein-interacting protein</fullName>
    </alternativeName>
    <alternativeName>
        <fullName evidence="6">Golgi-associated retrograde protein-interacting protein</fullName>
    </alternativeName>
    <alternativeName>
        <fullName>Tumor-suppressing STF cDNA 1 protein</fullName>
    </alternativeName>
    <alternativeName>
        <fullName evidence="4">Tumor-suppressing subchromosomal transferable fragment candidate gene 1 protein</fullName>
    </alternativeName>
</protein>
<comment type="function">
    <text evidence="1 3">Acts as a component of endosomal retrieval machinery that is involved in protein transport from early endosomes to either recycling endosomes or the trans-Golgi network (PubMed:27440922). Mediates the recruitment of Golgi-associated retrograde protein (GARP) complex to the trans-Golgi network and controls early endosome-to-Golgi transport of internalized protein (PubMed:27440922). Promotes the recycling of internalized transferrin receptor (TFRC) to the plasma membrane through interaction with endosome-associated recycling protein (EARP) complex (PubMed:27440922). Controls proper insulin distribution and secretion, and retention of cargo in mature dense core vesicles (By similarity). Required for the stability of the endosome-associated retrograde protein (EARP) complex subunits and for proper localization and association of EARP with membranes (By similarity).</text>
</comment>
<comment type="subunit">
    <text evidence="3">Interacts with two multisubunit tethering complexes: EARP composed of VPS50, VPS51, VPS52 and VPS53 subunits and GARP complex composed of VPS51, VPS52, VPS53 and VPS54 subunits. Interacts with SNAP29.</text>
</comment>
<comment type="interaction">
    <interactant intactId="EBI-1055422">
        <id>Q53HC9</id>
    </interactant>
    <interactant intactId="EBI-17490746">
        <id>A8MTQ0</id>
        <label>NOTO</label>
    </interactant>
    <organismsDiffer>false</organismsDiffer>
    <experiments>3</experiments>
</comment>
<comment type="subcellular location">
    <subcellularLocation>
        <location evidence="3">Golgi apparatus</location>
        <location evidence="3">trans-Golgi network</location>
    </subcellularLocation>
</comment>
<comment type="similarity">
    <text evidence="5">Belongs to the WD repeat EIPR1 family.</text>
</comment>
<proteinExistence type="evidence at protein level"/>
<reference key="1">
    <citation type="journal article" date="1997" name="Genomics">
        <title>A 2.5-Mb transcript map of a tumor-suppressing subchromosomal transferable fragment from 11p15.5, and isolation and sequence analysis of three novel genes.</title>
        <authorList>
            <person name="Hu R.-J."/>
            <person name="Lee M.P."/>
            <person name="Connors T.D."/>
            <person name="Johnson L.A."/>
            <person name="Burn T.C."/>
            <person name="Su K."/>
            <person name="Landes G.M."/>
            <person name="Feinberg A.P."/>
        </authorList>
    </citation>
    <scope>NUCLEOTIDE SEQUENCE [MRNA]</scope>
</reference>
<reference key="2">
    <citation type="submission" date="2005-04" db="EMBL/GenBank/DDBJ databases">
        <authorList>
            <person name="Suzuki Y."/>
            <person name="Sugano S."/>
            <person name="Totoki Y."/>
            <person name="Toyoda A."/>
            <person name="Takeda T."/>
            <person name="Sakaki Y."/>
            <person name="Tanaka A."/>
            <person name="Yokoyama S."/>
        </authorList>
    </citation>
    <scope>NUCLEOTIDE SEQUENCE [LARGE SCALE MRNA]</scope>
    <source>
        <tissue>Cerebellum</tissue>
    </source>
</reference>
<reference key="3">
    <citation type="journal article" date="2005" name="Nature">
        <title>Generation and annotation of the DNA sequences of human chromosomes 2 and 4.</title>
        <authorList>
            <person name="Hillier L.W."/>
            <person name="Graves T.A."/>
            <person name="Fulton R.S."/>
            <person name="Fulton L.A."/>
            <person name="Pepin K.H."/>
            <person name="Minx P."/>
            <person name="Wagner-McPherson C."/>
            <person name="Layman D."/>
            <person name="Wylie K."/>
            <person name="Sekhon M."/>
            <person name="Becker M.C."/>
            <person name="Fewell G.A."/>
            <person name="Delehaunty K.D."/>
            <person name="Miner T.L."/>
            <person name="Nash W.E."/>
            <person name="Kremitzki C."/>
            <person name="Oddy L."/>
            <person name="Du H."/>
            <person name="Sun H."/>
            <person name="Bradshaw-Cordum H."/>
            <person name="Ali J."/>
            <person name="Carter J."/>
            <person name="Cordes M."/>
            <person name="Harris A."/>
            <person name="Isak A."/>
            <person name="van Brunt A."/>
            <person name="Nguyen C."/>
            <person name="Du F."/>
            <person name="Courtney L."/>
            <person name="Kalicki J."/>
            <person name="Ozersky P."/>
            <person name="Abbott S."/>
            <person name="Armstrong J."/>
            <person name="Belter E.A."/>
            <person name="Caruso L."/>
            <person name="Cedroni M."/>
            <person name="Cotton M."/>
            <person name="Davidson T."/>
            <person name="Desai A."/>
            <person name="Elliott G."/>
            <person name="Erb T."/>
            <person name="Fronick C."/>
            <person name="Gaige T."/>
            <person name="Haakenson W."/>
            <person name="Haglund K."/>
            <person name="Holmes A."/>
            <person name="Harkins R."/>
            <person name="Kim K."/>
            <person name="Kruchowski S.S."/>
            <person name="Strong C.M."/>
            <person name="Grewal N."/>
            <person name="Goyea E."/>
            <person name="Hou S."/>
            <person name="Levy A."/>
            <person name="Martinka S."/>
            <person name="Mead K."/>
            <person name="McLellan M.D."/>
            <person name="Meyer R."/>
            <person name="Randall-Maher J."/>
            <person name="Tomlinson C."/>
            <person name="Dauphin-Kohlberg S."/>
            <person name="Kozlowicz-Reilly A."/>
            <person name="Shah N."/>
            <person name="Swearengen-Shahid S."/>
            <person name="Snider J."/>
            <person name="Strong J.T."/>
            <person name="Thompson J."/>
            <person name="Yoakum M."/>
            <person name="Leonard S."/>
            <person name="Pearman C."/>
            <person name="Trani L."/>
            <person name="Radionenko M."/>
            <person name="Waligorski J.E."/>
            <person name="Wang C."/>
            <person name="Rock S.M."/>
            <person name="Tin-Wollam A.-M."/>
            <person name="Maupin R."/>
            <person name="Latreille P."/>
            <person name="Wendl M.C."/>
            <person name="Yang S.-P."/>
            <person name="Pohl C."/>
            <person name="Wallis J.W."/>
            <person name="Spieth J."/>
            <person name="Bieri T.A."/>
            <person name="Berkowicz N."/>
            <person name="Nelson J.O."/>
            <person name="Osborne J."/>
            <person name="Ding L."/>
            <person name="Meyer R."/>
            <person name="Sabo A."/>
            <person name="Shotland Y."/>
            <person name="Sinha P."/>
            <person name="Wohldmann P.E."/>
            <person name="Cook L.L."/>
            <person name="Hickenbotham M.T."/>
            <person name="Eldred J."/>
            <person name="Williams D."/>
            <person name="Jones T.A."/>
            <person name="She X."/>
            <person name="Ciccarelli F.D."/>
            <person name="Izaurralde E."/>
            <person name="Taylor J."/>
            <person name="Schmutz J."/>
            <person name="Myers R.M."/>
            <person name="Cox D.R."/>
            <person name="Huang X."/>
            <person name="McPherson J.D."/>
            <person name="Mardis E.R."/>
            <person name="Clifton S.W."/>
            <person name="Warren W.C."/>
            <person name="Chinwalla A.T."/>
            <person name="Eddy S.R."/>
            <person name="Marra M.A."/>
            <person name="Ovcharenko I."/>
            <person name="Furey T.S."/>
            <person name="Miller W."/>
            <person name="Eichler E.E."/>
            <person name="Bork P."/>
            <person name="Suyama M."/>
            <person name="Torrents D."/>
            <person name="Waterston R.H."/>
            <person name="Wilson R.K."/>
        </authorList>
    </citation>
    <scope>NUCLEOTIDE SEQUENCE [LARGE SCALE GENOMIC DNA]</scope>
</reference>
<reference key="4">
    <citation type="submission" date="2005-09" db="EMBL/GenBank/DDBJ databases">
        <authorList>
            <person name="Mural R.J."/>
            <person name="Istrail S."/>
            <person name="Sutton G.G."/>
            <person name="Florea L."/>
            <person name="Halpern A.L."/>
            <person name="Mobarry C.M."/>
            <person name="Lippert R."/>
            <person name="Walenz B."/>
            <person name="Shatkay H."/>
            <person name="Dew I."/>
            <person name="Miller J.R."/>
            <person name="Flanigan M.J."/>
            <person name="Edwards N.J."/>
            <person name="Bolanos R."/>
            <person name="Fasulo D."/>
            <person name="Halldorsson B.V."/>
            <person name="Hannenhalli S."/>
            <person name="Turner R."/>
            <person name="Yooseph S."/>
            <person name="Lu F."/>
            <person name="Nusskern D.R."/>
            <person name="Shue B.C."/>
            <person name="Zheng X.H."/>
            <person name="Zhong F."/>
            <person name="Delcher A.L."/>
            <person name="Huson D.H."/>
            <person name="Kravitz S.A."/>
            <person name="Mouchard L."/>
            <person name="Reinert K."/>
            <person name="Remington K.A."/>
            <person name="Clark A.G."/>
            <person name="Waterman M.S."/>
            <person name="Eichler E.E."/>
            <person name="Adams M.D."/>
            <person name="Hunkapiller M.W."/>
            <person name="Myers E.W."/>
            <person name="Venter J.C."/>
        </authorList>
    </citation>
    <scope>NUCLEOTIDE SEQUENCE [LARGE SCALE GENOMIC DNA]</scope>
</reference>
<reference key="5">
    <citation type="journal article" date="2004" name="Genome Res.">
        <title>The status, quality, and expansion of the NIH full-length cDNA project: the Mammalian Gene Collection (MGC).</title>
        <authorList>
            <consortium name="The MGC Project Team"/>
        </authorList>
    </citation>
    <scope>NUCLEOTIDE SEQUENCE [LARGE SCALE MRNA]</scope>
    <source>
        <tissue>Colon</tissue>
    </source>
</reference>
<reference key="6">
    <citation type="journal article" date="2009" name="Sci. Signal.">
        <title>Quantitative phosphoproteomic analysis of T cell receptor signaling reveals system-wide modulation of protein-protein interactions.</title>
        <authorList>
            <person name="Mayya V."/>
            <person name="Lundgren D.H."/>
            <person name="Hwang S.-I."/>
            <person name="Rezaul K."/>
            <person name="Wu L."/>
            <person name="Eng J.K."/>
            <person name="Rodionov V."/>
            <person name="Han D.K."/>
        </authorList>
    </citation>
    <scope>PHOSPHORYLATION [LARGE SCALE ANALYSIS] AT SER-320</scope>
    <scope>IDENTIFICATION BY MASS SPECTROMETRY [LARGE SCALE ANALYSIS]</scope>
    <source>
        <tissue>Leukemic T-cell</tissue>
    </source>
</reference>
<reference key="7">
    <citation type="journal article" date="2011" name="BMC Syst. Biol.">
        <title>Initial characterization of the human central proteome.</title>
        <authorList>
            <person name="Burkard T.R."/>
            <person name="Planyavsky M."/>
            <person name="Kaupe I."/>
            <person name="Breitwieser F.P."/>
            <person name="Buerckstuemmer T."/>
            <person name="Bennett K.L."/>
            <person name="Superti-Furga G."/>
            <person name="Colinge J."/>
        </authorList>
    </citation>
    <scope>IDENTIFICATION BY MASS SPECTROMETRY [LARGE SCALE ANALYSIS]</scope>
</reference>
<reference key="8">
    <citation type="journal article" date="2012" name="Proc. Natl. Acad. Sci. U.S.A.">
        <title>N-terminal acetylome analyses and functional insights of the N-terminal acetyltransferase NatB.</title>
        <authorList>
            <person name="Van Damme P."/>
            <person name="Lasa M."/>
            <person name="Polevoda B."/>
            <person name="Gazquez C."/>
            <person name="Elosegui-Artola A."/>
            <person name="Kim D.S."/>
            <person name="De Juan-Pardo E."/>
            <person name="Demeyer K."/>
            <person name="Hole K."/>
            <person name="Larrea E."/>
            <person name="Timmerman E."/>
            <person name="Prieto J."/>
            <person name="Arnesen T."/>
            <person name="Sherman F."/>
            <person name="Gevaert K."/>
            <person name="Aldabe R."/>
        </authorList>
    </citation>
    <scope>ACETYLATION [LARGE SCALE ANALYSIS] AT MET-1</scope>
    <scope>IDENTIFICATION BY MASS SPECTROMETRY [LARGE SCALE ANALYSIS]</scope>
</reference>
<reference key="9">
    <citation type="journal article" date="2016" name="Mol. Biol. Cell">
        <title>TSSC1 is novel component of the endosomal retrieval machinery.</title>
        <authorList>
            <person name="Gershlick D.C."/>
            <person name="Schindler C."/>
            <person name="Chen Y."/>
            <person name="Bonifacino J.S."/>
        </authorList>
    </citation>
    <scope>FUNCTION</scope>
    <scope>SUBCELLULAR LOCATION</scope>
    <scope>INTERACTION WITH EARP COMPLEX</scope>
    <scope>INTERACTION WITH GARP COMPLEX</scope>
    <scope>INTERACTION WITH SNAP29</scope>
</reference>
<keyword id="KW-0007">Acetylation</keyword>
<keyword id="KW-0333">Golgi apparatus</keyword>
<keyword id="KW-0597">Phosphoprotein</keyword>
<keyword id="KW-1267">Proteomics identification</keyword>
<keyword id="KW-1185">Reference proteome</keyword>
<keyword id="KW-0677">Repeat</keyword>
<keyword id="KW-0853">WD repeat</keyword>
<evidence type="ECO:0000250" key="1">
    <source>
        <dbReference type="UniProtKB" id="Q5PPK9"/>
    </source>
</evidence>
<evidence type="ECO:0000256" key="2">
    <source>
        <dbReference type="SAM" id="MobiDB-lite"/>
    </source>
</evidence>
<evidence type="ECO:0000269" key="3">
    <source>
    </source>
</evidence>
<evidence type="ECO:0000303" key="4">
    <source>
    </source>
</evidence>
<evidence type="ECO:0000305" key="5"/>
<evidence type="ECO:0000305" key="6">
    <source>
    </source>
</evidence>
<evidence type="ECO:0000312" key="7">
    <source>
        <dbReference type="HGNC" id="HGNC:12383"/>
    </source>
</evidence>
<evidence type="ECO:0007744" key="8">
    <source>
    </source>
</evidence>
<evidence type="ECO:0007744" key="9">
    <source>
    </source>
</evidence>
<gene>
    <name evidence="7" type="primary">EIPR1</name>
    <name evidence="4 7" type="synonym">TSSC1</name>
</gene>
<sequence>MEDDAPVIYGLEFQARALTPQTAETDAIRFLVGTQSLKYDNQIHIIDFDDENNIINKNVLLHQAGEIWHISASPADRGVLTTCYNRTSDSKVLTCAAVWRMPKELESGSHESPDDSSSTAQTLELLCHLDNTAHGNMACVVWEPMGDGKKIISLADNHILLWDLQESSSQAVLASSASLEGKGQLKFTSGRWSPHHNCTQVATANDTTLRGWDTRSMSQIYCIENAHGQLVRDLDFNPNKQYYLASCGDDCKVKFWDTRNVTEPVKTLEEHSHWVWNVRYNHSHDQLVLTGSSDSRVILSNMVSISSEPFGHLVDDDDISDQEDHRSEEKSKEPLQDNVIATYEEHEDSVYAVDWSSADPWLFASLSYDGRLVINRVPRALKYHILL</sequence>
<name>EIPR1_HUMAN</name>
<organism>
    <name type="scientific">Homo sapiens</name>
    <name type="common">Human</name>
    <dbReference type="NCBI Taxonomy" id="9606"/>
    <lineage>
        <taxon>Eukaryota</taxon>
        <taxon>Metazoa</taxon>
        <taxon>Chordata</taxon>
        <taxon>Craniata</taxon>
        <taxon>Vertebrata</taxon>
        <taxon>Euteleostomi</taxon>
        <taxon>Mammalia</taxon>
        <taxon>Eutheria</taxon>
        <taxon>Euarchontoglires</taxon>
        <taxon>Primates</taxon>
        <taxon>Haplorrhini</taxon>
        <taxon>Catarrhini</taxon>
        <taxon>Hominidae</taxon>
        <taxon>Homo</taxon>
    </lineage>
</organism>
<dbReference type="EMBL" id="AF019952">
    <property type="protein sequence ID" value="AAC51911.1"/>
    <property type="molecule type" value="mRNA"/>
</dbReference>
<dbReference type="EMBL" id="AK222652">
    <property type="protein sequence ID" value="BAD96372.1"/>
    <property type="molecule type" value="mRNA"/>
</dbReference>
<dbReference type="EMBL" id="AC019118">
    <property type="protein sequence ID" value="AAY24338.1"/>
    <property type="molecule type" value="Genomic_DNA"/>
</dbReference>
<dbReference type="EMBL" id="AC073502">
    <property type="protein sequence ID" value="AAY24193.1"/>
    <property type="molecule type" value="Genomic_DNA"/>
</dbReference>
<dbReference type="EMBL" id="CH471053">
    <property type="protein sequence ID" value="EAX01070.1"/>
    <property type="molecule type" value="Genomic_DNA"/>
</dbReference>
<dbReference type="EMBL" id="CH471053">
    <property type="protein sequence ID" value="EAX01071.1"/>
    <property type="molecule type" value="Genomic_DNA"/>
</dbReference>
<dbReference type="EMBL" id="BC002485">
    <property type="protein sequence ID" value="AAH02485.1"/>
    <property type="molecule type" value="mRNA"/>
</dbReference>
<dbReference type="CCDS" id="CCDS1651.1"/>
<dbReference type="RefSeq" id="NP_003301.1">
    <property type="nucleotide sequence ID" value="NM_003310.5"/>
</dbReference>
<dbReference type="SMR" id="Q53HC9"/>
<dbReference type="BioGRID" id="113111">
    <property type="interactions" value="102"/>
</dbReference>
<dbReference type="FunCoup" id="Q53HC9">
    <property type="interactions" value="1320"/>
</dbReference>
<dbReference type="IntAct" id="Q53HC9">
    <property type="interactions" value="56"/>
</dbReference>
<dbReference type="STRING" id="9606.ENSP00000381652"/>
<dbReference type="GlyGen" id="Q53HC9">
    <property type="glycosylation" value="1 site, 1 O-linked glycan (1 site)"/>
</dbReference>
<dbReference type="iPTMnet" id="Q53HC9"/>
<dbReference type="PhosphoSitePlus" id="Q53HC9"/>
<dbReference type="BioMuta" id="EIPR1"/>
<dbReference type="DMDM" id="84029603"/>
<dbReference type="OGP" id="O43179"/>
<dbReference type="jPOST" id="Q53HC9"/>
<dbReference type="MassIVE" id="Q53HC9"/>
<dbReference type="PaxDb" id="9606-ENSP00000371559"/>
<dbReference type="PeptideAtlas" id="Q53HC9"/>
<dbReference type="ProteomicsDB" id="62505"/>
<dbReference type="Pumba" id="Q53HC9"/>
<dbReference type="Antibodypedia" id="26290">
    <property type="antibodies" value="191 antibodies from 26 providers"/>
</dbReference>
<dbReference type="DNASU" id="7260"/>
<dbReference type="Ensembl" id="ENST00000382125.9">
    <property type="protein sequence ID" value="ENSP00000371559.4"/>
    <property type="gene ID" value="ENSG00000032389.13"/>
</dbReference>
<dbReference type="GeneID" id="7260"/>
<dbReference type="KEGG" id="hsa:7260"/>
<dbReference type="MANE-Select" id="ENST00000382125.9">
    <property type="protein sequence ID" value="ENSP00000371559.4"/>
    <property type="RefSeq nucleotide sequence ID" value="NM_003310.5"/>
    <property type="RefSeq protein sequence ID" value="NP_003301.1"/>
</dbReference>
<dbReference type="UCSC" id="uc002qxj.3">
    <property type="organism name" value="human"/>
</dbReference>
<dbReference type="AGR" id="HGNC:12383"/>
<dbReference type="CTD" id="7260"/>
<dbReference type="DisGeNET" id="7260"/>
<dbReference type="GeneCards" id="EIPR1"/>
<dbReference type="HGNC" id="HGNC:12383">
    <property type="gene designation" value="EIPR1"/>
</dbReference>
<dbReference type="HPA" id="ENSG00000032389">
    <property type="expression patterns" value="Low tissue specificity"/>
</dbReference>
<dbReference type="MIM" id="608998">
    <property type="type" value="gene"/>
</dbReference>
<dbReference type="neXtProt" id="NX_Q53HC9"/>
<dbReference type="OpenTargets" id="ENSG00000032389"/>
<dbReference type="PharmGKB" id="PA37051"/>
<dbReference type="VEuPathDB" id="HostDB:ENSG00000032389"/>
<dbReference type="eggNOG" id="KOG1007">
    <property type="taxonomic scope" value="Eukaryota"/>
</dbReference>
<dbReference type="GeneTree" id="ENSGT00730000111137"/>
<dbReference type="HOGENOM" id="CLU_050772_0_0_1"/>
<dbReference type="InParanoid" id="Q53HC9"/>
<dbReference type="OMA" id="HQFLALH"/>
<dbReference type="OrthoDB" id="196957at2759"/>
<dbReference type="PAN-GO" id="Q53HC9">
    <property type="GO annotations" value="1 GO annotation based on evolutionary models"/>
</dbReference>
<dbReference type="PhylomeDB" id="Q53HC9"/>
<dbReference type="TreeFam" id="TF105847"/>
<dbReference type="PathwayCommons" id="Q53HC9"/>
<dbReference type="SignaLink" id="Q53HC9"/>
<dbReference type="BioGRID-ORCS" id="7260">
    <property type="hits" value="75 hits in 1171 CRISPR screens"/>
</dbReference>
<dbReference type="ChiTaRS" id="TSSC1">
    <property type="organism name" value="human"/>
</dbReference>
<dbReference type="GeneWiki" id="TSSC1"/>
<dbReference type="GenomeRNAi" id="7260"/>
<dbReference type="Pharos" id="Q53HC9">
    <property type="development level" value="Tbio"/>
</dbReference>
<dbReference type="PRO" id="PR:Q53HC9"/>
<dbReference type="Proteomes" id="UP000005640">
    <property type="component" value="Chromosome 2"/>
</dbReference>
<dbReference type="RNAct" id="Q53HC9">
    <property type="molecule type" value="protein"/>
</dbReference>
<dbReference type="Bgee" id="ENSG00000032389">
    <property type="expression patterns" value="Expressed in prefrontal cortex and 169 other cell types or tissues"/>
</dbReference>
<dbReference type="ExpressionAtlas" id="Q53HC9">
    <property type="expression patterns" value="baseline and differential"/>
</dbReference>
<dbReference type="GO" id="GO:0005802">
    <property type="term" value="C:trans-Golgi network"/>
    <property type="evidence" value="ECO:0000314"/>
    <property type="project" value="UniProtKB"/>
</dbReference>
<dbReference type="GO" id="GO:0032456">
    <property type="term" value="P:endocytic recycling"/>
    <property type="evidence" value="ECO:0000250"/>
    <property type="project" value="UniProtKB"/>
</dbReference>
<dbReference type="GO" id="GO:2001137">
    <property type="term" value="P:positive regulation of endocytic recycling"/>
    <property type="evidence" value="ECO:0000314"/>
    <property type="project" value="UniProtKB"/>
</dbReference>
<dbReference type="GO" id="GO:1905281">
    <property type="term" value="P:positive regulation of retrograde transport, endosome to Golgi"/>
    <property type="evidence" value="ECO:0000314"/>
    <property type="project" value="UniProtKB"/>
</dbReference>
<dbReference type="GO" id="GO:0016567">
    <property type="term" value="P:protein ubiquitination"/>
    <property type="evidence" value="ECO:0000318"/>
    <property type="project" value="GO_Central"/>
</dbReference>
<dbReference type="GO" id="GO:0050796">
    <property type="term" value="P:regulation of insulin secretion"/>
    <property type="evidence" value="ECO:0000250"/>
    <property type="project" value="UniProtKB"/>
</dbReference>
<dbReference type="FunFam" id="2.130.10.10:FF:000156">
    <property type="entry name" value="protein TSSC1 isoform X1"/>
    <property type="match status" value="1"/>
</dbReference>
<dbReference type="Gene3D" id="2.130.10.10">
    <property type="entry name" value="YVTN repeat-like/Quinoprotein amine dehydrogenase"/>
    <property type="match status" value="1"/>
</dbReference>
<dbReference type="InterPro" id="IPR040323">
    <property type="entry name" value="EIPR1"/>
</dbReference>
<dbReference type="InterPro" id="IPR015943">
    <property type="entry name" value="WD40/YVTN_repeat-like_dom_sf"/>
</dbReference>
<dbReference type="InterPro" id="IPR019775">
    <property type="entry name" value="WD40_repeat_CS"/>
</dbReference>
<dbReference type="InterPro" id="IPR001680">
    <property type="entry name" value="WD40_rpt"/>
</dbReference>
<dbReference type="PANTHER" id="PTHR14205:SF15">
    <property type="entry name" value="EARP AND GARP COMPLEX-INTERACTING PROTEIN 1"/>
    <property type="match status" value="1"/>
</dbReference>
<dbReference type="PANTHER" id="PTHR14205">
    <property type="entry name" value="WD-REPEAT PROTEIN"/>
    <property type="match status" value="1"/>
</dbReference>
<dbReference type="Pfam" id="PF23609">
    <property type="entry name" value="Beta-prop_EIPR1"/>
    <property type="match status" value="1"/>
</dbReference>
<dbReference type="Pfam" id="PF00400">
    <property type="entry name" value="WD40"/>
    <property type="match status" value="1"/>
</dbReference>
<dbReference type="SMART" id="SM00320">
    <property type="entry name" value="WD40"/>
    <property type="match status" value="5"/>
</dbReference>
<dbReference type="SUPFAM" id="SSF101908">
    <property type="entry name" value="Putative isomerase YbhE"/>
    <property type="match status" value="1"/>
</dbReference>
<dbReference type="PROSITE" id="PS00678">
    <property type="entry name" value="WD_REPEATS_1"/>
    <property type="match status" value="1"/>
</dbReference>
<dbReference type="PROSITE" id="PS50082">
    <property type="entry name" value="WD_REPEATS_2"/>
    <property type="match status" value="1"/>
</dbReference>
<dbReference type="PROSITE" id="PS50294">
    <property type="entry name" value="WD_REPEATS_REGION"/>
    <property type="match status" value="1"/>
</dbReference>